<gene>
    <name evidence="1" type="primary">caiD</name>
    <name type="ordered locus">EcSMS35_0037</name>
</gene>
<accession>B1LFW9</accession>
<keyword id="KW-0456">Lyase</keyword>
<reference key="1">
    <citation type="journal article" date="2008" name="J. Bacteriol.">
        <title>Insights into the environmental resistance gene pool from the genome sequence of the multidrug-resistant environmental isolate Escherichia coli SMS-3-5.</title>
        <authorList>
            <person name="Fricke W.F."/>
            <person name="Wright M.S."/>
            <person name="Lindell A.H."/>
            <person name="Harkins D.M."/>
            <person name="Baker-Austin C."/>
            <person name="Ravel J."/>
            <person name="Stepanauskas R."/>
        </authorList>
    </citation>
    <scope>NUCLEOTIDE SEQUENCE [LARGE SCALE GENOMIC DNA]</scope>
    <source>
        <strain>SMS-3-5 / SECEC</strain>
    </source>
</reference>
<evidence type="ECO:0000255" key="1">
    <source>
        <dbReference type="HAMAP-Rule" id="MF_01051"/>
    </source>
</evidence>
<dbReference type="EC" id="4.2.1.149" evidence="1"/>
<dbReference type="EMBL" id="CP000970">
    <property type="protein sequence ID" value="ACB19722.1"/>
    <property type="molecule type" value="Genomic_DNA"/>
</dbReference>
<dbReference type="RefSeq" id="WP_001361348.1">
    <property type="nucleotide sequence ID" value="NC_010498.1"/>
</dbReference>
<dbReference type="SMR" id="B1LFW9"/>
<dbReference type="KEGG" id="ecm:EcSMS35_0037"/>
<dbReference type="HOGENOM" id="CLU_009834_7_6_6"/>
<dbReference type="UniPathway" id="UPA00117"/>
<dbReference type="Proteomes" id="UP000007011">
    <property type="component" value="Chromosome"/>
</dbReference>
<dbReference type="GO" id="GO:0016836">
    <property type="term" value="F:hydro-lyase activity"/>
    <property type="evidence" value="ECO:0007669"/>
    <property type="project" value="UniProtKB-UniRule"/>
</dbReference>
<dbReference type="GO" id="GO:0008735">
    <property type="term" value="F:L-carnitine CoA-transferase activity"/>
    <property type="evidence" value="ECO:0007669"/>
    <property type="project" value="RHEA"/>
</dbReference>
<dbReference type="GO" id="GO:0009437">
    <property type="term" value="P:carnitine metabolic process"/>
    <property type="evidence" value="ECO:0007669"/>
    <property type="project" value="UniProtKB-UniRule"/>
</dbReference>
<dbReference type="GO" id="GO:0006635">
    <property type="term" value="P:fatty acid beta-oxidation"/>
    <property type="evidence" value="ECO:0007669"/>
    <property type="project" value="TreeGrafter"/>
</dbReference>
<dbReference type="CDD" id="cd06558">
    <property type="entry name" value="crotonase-like"/>
    <property type="match status" value="1"/>
</dbReference>
<dbReference type="FunFam" id="1.10.12.10:FF:000005">
    <property type="entry name" value="Carnitinyl-CoA dehydratase"/>
    <property type="match status" value="1"/>
</dbReference>
<dbReference type="FunFam" id="3.90.226.10:FF:000009">
    <property type="entry name" value="Carnitinyl-CoA dehydratase"/>
    <property type="match status" value="1"/>
</dbReference>
<dbReference type="Gene3D" id="3.90.226.10">
    <property type="entry name" value="2-enoyl-CoA Hydratase, Chain A, domain 1"/>
    <property type="match status" value="1"/>
</dbReference>
<dbReference type="Gene3D" id="1.10.12.10">
    <property type="entry name" value="Lyase 2-enoyl-coa Hydratase, Chain A, domain 2"/>
    <property type="match status" value="1"/>
</dbReference>
<dbReference type="HAMAP" id="MF_01051">
    <property type="entry name" value="CaiD"/>
    <property type="match status" value="1"/>
</dbReference>
<dbReference type="InterPro" id="IPR022852">
    <property type="entry name" value="Carnitinyl_CoA_dehydratase"/>
</dbReference>
<dbReference type="InterPro" id="IPR029045">
    <property type="entry name" value="ClpP/crotonase-like_dom_sf"/>
</dbReference>
<dbReference type="InterPro" id="IPR018376">
    <property type="entry name" value="Enoyl-CoA_hyd/isom_CS"/>
</dbReference>
<dbReference type="InterPro" id="IPR001753">
    <property type="entry name" value="Enoyl-CoA_hydra/iso"/>
</dbReference>
<dbReference type="InterPro" id="IPR014748">
    <property type="entry name" value="Enoyl-CoA_hydra_C"/>
</dbReference>
<dbReference type="NCBIfam" id="NF002936">
    <property type="entry name" value="PRK03580.1"/>
    <property type="match status" value="1"/>
</dbReference>
<dbReference type="PANTHER" id="PTHR11941:SF54">
    <property type="entry name" value="ENOYL-COA HYDRATASE, MITOCHONDRIAL"/>
    <property type="match status" value="1"/>
</dbReference>
<dbReference type="PANTHER" id="PTHR11941">
    <property type="entry name" value="ENOYL-COA HYDRATASE-RELATED"/>
    <property type="match status" value="1"/>
</dbReference>
<dbReference type="Pfam" id="PF00378">
    <property type="entry name" value="ECH_1"/>
    <property type="match status" value="1"/>
</dbReference>
<dbReference type="SUPFAM" id="SSF52096">
    <property type="entry name" value="ClpP/crotonase"/>
    <property type="match status" value="1"/>
</dbReference>
<dbReference type="PROSITE" id="PS00166">
    <property type="entry name" value="ENOYL_COA_HYDRATASE"/>
    <property type="match status" value="1"/>
</dbReference>
<organism>
    <name type="scientific">Escherichia coli (strain SMS-3-5 / SECEC)</name>
    <dbReference type="NCBI Taxonomy" id="439855"/>
    <lineage>
        <taxon>Bacteria</taxon>
        <taxon>Pseudomonadati</taxon>
        <taxon>Pseudomonadota</taxon>
        <taxon>Gammaproteobacteria</taxon>
        <taxon>Enterobacterales</taxon>
        <taxon>Enterobacteriaceae</taxon>
        <taxon>Escherichia</taxon>
    </lineage>
</organism>
<comment type="function">
    <text evidence="1">Catalyzes the reversible dehydration of L-carnitinyl-CoA to crotonobetainyl-CoA.</text>
</comment>
<comment type="catalytic activity">
    <reaction evidence="1">
        <text>(R)-carnitinyl-CoA = crotonobetainyl-CoA + H2O</text>
        <dbReference type="Rhea" id="RHEA:28338"/>
        <dbReference type="ChEBI" id="CHEBI:15377"/>
        <dbReference type="ChEBI" id="CHEBI:60932"/>
        <dbReference type="ChEBI" id="CHEBI:60933"/>
        <dbReference type="EC" id="4.2.1.149"/>
    </reaction>
</comment>
<comment type="pathway">
    <text evidence="1">Amine and polyamine metabolism; carnitine metabolism.</text>
</comment>
<comment type="similarity">
    <text evidence="1">Belongs to the enoyl-CoA hydratase/isomerase family.</text>
</comment>
<protein>
    <recommendedName>
        <fullName evidence="1">Carnitinyl-CoA dehydratase</fullName>
        <ecNumber evidence="1">4.2.1.149</ecNumber>
    </recommendedName>
    <alternativeName>
        <fullName evidence="1">Crotonobetainyl-CoA hydratase</fullName>
    </alternativeName>
</protein>
<sequence length="261" mass="28153">MSESLHLTRNGSILEITLDRPKANAIDAKTSFEMGEVFLNFRDDPQLRVAIITGAGEKFFSAGWDLKAAAEGEAPDADFGPGGFAGLTEIFNLDKPVIAAVNGYAFGGGFELALAADFIVCADNASFALPEAKLGIVPDSGGVLRLPKILPPAIVNEMVMTGRRMGAEEALRWGVVNRVVSQAELMDNARELAQQLVNSAPLAIAALKEIYRTTSEMPVEEAYRYIRSGVLKNYPSVLHSEDAIEGPLAFAEKRDPVWKGR</sequence>
<proteinExistence type="inferred from homology"/>
<name>CAID_ECOSM</name>
<feature type="chain" id="PRO_1000136258" description="Carnitinyl-CoA dehydratase">
    <location>
        <begin position="1"/>
        <end position="261"/>
    </location>
</feature>
<feature type="active site" description="Nucleophile" evidence="1">
    <location>
        <position position="111"/>
    </location>
</feature>
<feature type="active site" description="Proton acceptor" evidence="1">
    <location>
        <position position="131"/>
    </location>
</feature>